<name>COPB_YEAST</name>
<comment type="function">
    <text evidence="5 7">The coatomer is a cytosolic protein complex that binds to dilysine motifs and reversibly associates with Golgi non-clathrin-coated vesicles, which further mediate biosynthetic protein transport from the ER, via the Golgi up to the trans Golgi network. Coatomer complex is required for budding from Golgi membranes, and is essential for the retrograde Golgi-to-ER transport of dilysine-tagged proteins. Required for mitochondrial morphology.</text>
</comment>
<comment type="subunit">
    <text evidence="4">Oligomeric complex that consists of at least the alpha, beta, beta', gamma, delta, epsilon and zeta subunits. The complex interacts with ARF1 and PAB1.</text>
</comment>
<comment type="interaction">
    <interactant intactId="EBI-4869">
        <id>P41810</id>
    </interactant>
    <interactant intactId="EBI-27850">
        <id>Q04651</id>
        <label>ERV41</label>
    </interactant>
    <organismsDiffer>false</organismsDiffer>
    <experiments>4</experiments>
</comment>
<comment type="interaction">
    <interactant intactId="EBI-4869">
        <id>P41810</id>
    </interactant>
    <interactant intactId="EBI-4905">
        <id>P53600</id>
        <label>RET3</label>
    </interactant>
    <organismsDiffer>false</organismsDiffer>
    <experiments>3</experiments>
</comment>
<comment type="subcellular location">
    <subcellularLocation>
        <location evidence="1">Cytoplasm</location>
    </subcellularLocation>
    <subcellularLocation>
        <location evidence="2">Golgi apparatus membrane</location>
        <topology evidence="2">Peripheral membrane protein</topology>
        <orientation evidence="2">Cytoplasmic side</orientation>
    </subcellularLocation>
    <subcellularLocation>
        <location evidence="1">Cytoplasmic vesicle</location>
        <location evidence="1">COPI-coated vesicle membrane</location>
        <topology evidence="1">Peripheral membrane protein</topology>
        <orientation evidence="1">Cytoplasmic side</orientation>
    </subcellularLocation>
    <text evidence="1">The coatomer is cytoplasmic or polymerized on the cytoplasmic side of the Golgi, as well as on the vesicles/buds originating from it.</text>
</comment>
<comment type="PTM">
    <text>The N-terminus is blocked.</text>
</comment>
<comment type="disruption phenotype">
    <text evidence="7">Causes a block in ER to Golgi transport. Exhibits exaggerated ER structures displaying interconnected networks of ER cisternae. Cells arrest at all stages of the vegetative cycle.</text>
</comment>
<comment type="miscellaneous">
    <text evidence="3">Present with 26000 molecules/cell in log phase SD medium.</text>
</comment>
<protein>
    <recommendedName>
        <fullName>Coatomer subunit beta</fullName>
    </recommendedName>
    <alternativeName>
        <fullName>Beta-coat protein</fullName>
        <shortName>Beta-COP</shortName>
    </alternativeName>
</protein>
<keyword id="KW-0963">Cytoplasm</keyword>
<keyword id="KW-0968">Cytoplasmic vesicle</keyword>
<keyword id="KW-0903">Direct protein sequencing</keyword>
<keyword id="KW-0931">ER-Golgi transport</keyword>
<keyword id="KW-0333">Golgi apparatus</keyword>
<keyword id="KW-0472">Membrane</keyword>
<keyword id="KW-0597">Phosphoprotein</keyword>
<keyword id="KW-0653">Protein transport</keyword>
<keyword id="KW-1185">Reference proteome</keyword>
<keyword id="KW-0677">Repeat</keyword>
<keyword id="KW-0813">Transport</keyword>
<gene>
    <name type="primary">SEC26</name>
    <name type="ordered locus">YDR238C</name>
    <name type="ORF">YD8419.05C</name>
</gene>
<sequence length="973" mass="109019">MTSLSSQPAYTLVFDPSPSMETYSSTDFQKALEKGSDEQKIDTMKSILVTMLEGNPMPELLMHIIRFVMPSKNKELKKLLYFYWEIVPKLAEDGKLRHEMILVCNAIQHDLQHPNEYIRGNTLRFLTKLREAELLEQMVPSVLACLEYRHAYVRKYAILAVFSIFKVSEHLLPDAKEIINSFIVAETDPICKRNAFIGLAELDRENALHYLENNIADIENLDPLLQAVFVQFIRQDANRTPALKAQYIELLMELLSTTTSDEVIFETALALTVLSANPNVLVPAVNKLIDLAVKVSDNNIKLIVLDRIQDINANNVGALEELTLDILRVLNAEDLDVRSKALDISMDLATSRNAEDVVQLLKKELQTTVNNPDQDKAMQYRQLLIKTIRTVAVNFVEMAASVVSLLLDFIGDLNSVAASGIIAFIKEVIEKYPQLRANILENMVQTLDKVRSAKAYRGALWIMGEYAEGESEIQHCWKHIRNSVGEVPILQSEIKKLTQNQEHTEENEVDATAKPTGPVILPDGTYATESAFDVKTSQKSVTDEERDSRPPIRRFVLSGDFYTAAILANTIIKLVLKFENVSKNKTVINALKAEALLILVSIVRVGQSSLVEKKIDEDSLERVMTSISILLDEVNPEEKKEEVKLLEVAFLDTTKSSFKRQIEIAKKNKHKRALKDSCKNIEPIDTPISFRQFAGVDSTNVQKDSIEEDLQLAMKGDAIHATSSSSISKLKKIVPLCGFSDPVYAEACITNNQFDVVLDVLLVNQTKETLKNLHVQFATLGDLKIIDTPQKTNVIPHGFHKFTVTVKVSSADTGVIFGNIIYDGAHGEDARYVILNDVHVDIMDYIKPATADDEHFRTMWNAFEWENKISVKSQLPTLHAYLRELVKGTNMGILTPSESLGEDDCRFLSCNLYAKSSFGEDALANLCIEKDSKTNDVIGYVRIRSKGQGLALSLGDRVALIAKKTNKLALTHV</sequence>
<evidence type="ECO:0000250" key="1"/>
<evidence type="ECO:0000269" key="2">
    <source>
    </source>
</evidence>
<evidence type="ECO:0000269" key="3">
    <source>
    </source>
</evidence>
<evidence type="ECO:0000269" key="4">
    <source>
    </source>
</evidence>
<evidence type="ECO:0000269" key="5">
    <source>
    </source>
</evidence>
<evidence type="ECO:0000269" key="6">
    <source>
    </source>
</evidence>
<evidence type="ECO:0000269" key="7">
    <source>
    </source>
</evidence>
<evidence type="ECO:0000305" key="8"/>
<evidence type="ECO:0007744" key="9">
    <source>
    </source>
</evidence>
<proteinExistence type="evidence at protein level"/>
<reference key="1">
    <citation type="journal article" date="1994" name="J. Biol. Chem.">
        <title>Yeast beta- and beta'-coat proteins (COP). Two coatomer subunits essential for endoplasmic reticulum-to-Golgi protein traffic.</title>
        <authorList>
            <person name="Duden R."/>
            <person name="Hosobuchi M."/>
            <person name="Hamamoto S."/>
            <person name="Winey M."/>
            <person name="Byers B."/>
            <person name="Schekman R."/>
        </authorList>
    </citation>
    <scope>NUCLEOTIDE SEQUENCE [GENOMIC DNA]</scope>
    <scope>PROTEIN SEQUENCE OF 353-362; 496-514; 645-655 AND 934-942</scope>
    <scope>FUNCTION</scope>
    <scope>PTM</scope>
    <scope>DISRUPTION PHENOTYPE</scope>
    <source>
        <strain>RSY255</strain>
    </source>
</reference>
<reference key="2">
    <citation type="journal article" date="1997" name="Nature">
        <title>The nucleotide sequence of Saccharomyces cerevisiae chromosome IV.</title>
        <authorList>
            <person name="Jacq C."/>
            <person name="Alt-Moerbe J."/>
            <person name="Andre B."/>
            <person name="Arnold W."/>
            <person name="Bahr A."/>
            <person name="Ballesta J.P.G."/>
            <person name="Bargues M."/>
            <person name="Baron L."/>
            <person name="Becker A."/>
            <person name="Biteau N."/>
            <person name="Bloecker H."/>
            <person name="Blugeon C."/>
            <person name="Boskovic J."/>
            <person name="Brandt P."/>
            <person name="Brueckner M."/>
            <person name="Buitrago M.J."/>
            <person name="Coster F."/>
            <person name="Delaveau T."/>
            <person name="del Rey F."/>
            <person name="Dujon B."/>
            <person name="Eide L.G."/>
            <person name="Garcia-Cantalejo J.M."/>
            <person name="Goffeau A."/>
            <person name="Gomez-Peris A."/>
            <person name="Granotier C."/>
            <person name="Hanemann V."/>
            <person name="Hankeln T."/>
            <person name="Hoheisel J.D."/>
            <person name="Jaeger W."/>
            <person name="Jimenez A."/>
            <person name="Jonniaux J.-L."/>
            <person name="Kraemer C."/>
            <person name="Kuester H."/>
            <person name="Laamanen P."/>
            <person name="Legros Y."/>
            <person name="Louis E.J."/>
            <person name="Moeller-Rieker S."/>
            <person name="Monnet A."/>
            <person name="Moro M."/>
            <person name="Mueller-Auer S."/>
            <person name="Nussbaumer B."/>
            <person name="Paricio N."/>
            <person name="Paulin L."/>
            <person name="Perea J."/>
            <person name="Perez-Alonso M."/>
            <person name="Perez-Ortin J.E."/>
            <person name="Pohl T.M."/>
            <person name="Prydz H."/>
            <person name="Purnelle B."/>
            <person name="Rasmussen S.W."/>
            <person name="Remacha M.A."/>
            <person name="Revuelta J.L."/>
            <person name="Rieger M."/>
            <person name="Salom D."/>
            <person name="Saluz H.P."/>
            <person name="Saiz J.E."/>
            <person name="Saren A.-M."/>
            <person name="Schaefer M."/>
            <person name="Scharfe M."/>
            <person name="Schmidt E.R."/>
            <person name="Schneider C."/>
            <person name="Scholler P."/>
            <person name="Schwarz S."/>
            <person name="Soler-Mira A."/>
            <person name="Urrestarazu L.A."/>
            <person name="Verhasselt P."/>
            <person name="Vissers S."/>
            <person name="Voet M."/>
            <person name="Volckaert G."/>
            <person name="Wagner G."/>
            <person name="Wambutt R."/>
            <person name="Wedler E."/>
            <person name="Wedler H."/>
            <person name="Woelfl S."/>
            <person name="Harris D.E."/>
            <person name="Bowman S."/>
            <person name="Brown D."/>
            <person name="Churcher C.M."/>
            <person name="Connor R."/>
            <person name="Dedman K."/>
            <person name="Gentles S."/>
            <person name="Hamlin N."/>
            <person name="Hunt S."/>
            <person name="Jones L."/>
            <person name="McDonald S."/>
            <person name="Murphy L.D."/>
            <person name="Niblett D."/>
            <person name="Odell C."/>
            <person name="Oliver K."/>
            <person name="Rajandream M.A."/>
            <person name="Richards C."/>
            <person name="Shore L."/>
            <person name="Walsh S.V."/>
            <person name="Barrell B.G."/>
            <person name="Dietrich F.S."/>
            <person name="Mulligan J.T."/>
            <person name="Allen E."/>
            <person name="Araujo R."/>
            <person name="Aviles E."/>
            <person name="Berno A."/>
            <person name="Carpenter J."/>
            <person name="Chen E."/>
            <person name="Cherry J.M."/>
            <person name="Chung E."/>
            <person name="Duncan M."/>
            <person name="Hunicke-Smith S."/>
            <person name="Hyman R.W."/>
            <person name="Komp C."/>
            <person name="Lashkari D."/>
            <person name="Lew H."/>
            <person name="Lin D."/>
            <person name="Mosedale D."/>
            <person name="Nakahara K."/>
            <person name="Namath A."/>
            <person name="Oefner P."/>
            <person name="Oh C."/>
            <person name="Petel F.X."/>
            <person name="Roberts D."/>
            <person name="Schramm S."/>
            <person name="Schroeder M."/>
            <person name="Shogren T."/>
            <person name="Shroff N."/>
            <person name="Winant A."/>
            <person name="Yelton M.A."/>
            <person name="Botstein D."/>
            <person name="Davis R.W."/>
            <person name="Johnston M."/>
            <person name="Andrews S."/>
            <person name="Brinkman R."/>
            <person name="Cooper J."/>
            <person name="Ding H."/>
            <person name="Du Z."/>
            <person name="Favello A."/>
            <person name="Fulton L."/>
            <person name="Gattung S."/>
            <person name="Greco T."/>
            <person name="Hallsworth K."/>
            <person name="Hawkins J."/>
            <person name="Hillier L.W."/>
            <person name="Jier M."/>
            <person name="Johnson D."/>
            <person name="Johnston L."/>
            <person name="Kirsten J."/>
            <person name="Kucaba T."/>
            <person name="Langston Y."/>
            <person name="Latreille P."/>
            <person name="Le T."/>
            <person name="Mardis E."/>
            <person name="Menezes S."/>
            <person name="Miller N."/>
            <person name="Nhan M."/>
            <person name="Pauley A."/>
            <person name="Peluso D."/>
            <person name="Rifkin L."/>
            <person name="Riles L."/>
            <person name="Taich A."/>
            <person name="Trevaskis E."/>
            <person name="Vignati D."/>
            <person name="Wilcox L."/>
            <person name="Wohldman P."/>
            <person name="Vaudin M."/>
            <person name="Wilson R."/>
            <person name="Waterston R."/>
            <person name="Albermann K."/>
            <person name="Hani J."/>
            <person name="Heumann K."/>
            <person name="Kleine K."/>
            <person name="Mewes H.-W."/>
            <person name="Zollner A."/>
            <person name="Zaccaria P."/>
        </authorList>
    </citation>
    <scope>NUCLEOTIDE SEQUENCE [LARGE SCALE GENOMIC DNA]</scope>
    <source>
        <strain>ATCC 204508 / S288c</strain>
    </source>
</reference>
<reference key="3">
    <citation type="journal article" date="2014" name="G3 (Bethesda)">
        <title>The reference genome sequence of Saccharomyces cerevisiae: Then and now.</title>
        <authorList>
            <person name="Engel S.R."/>
            <person name="Dietrich F.S."/>
            <person name="Fisk D.G."/>
            <person name="Binkley G."/>
            <person name="Balakrishnan R."/>
            <person name="Costanzo M.C."/>
            <person name="Dwight S.S."/>
            <person name="Hitz B.C."/>
            <person name="Karra K."/>
            <person name="Nash R.S."/>
            <person name="Weng S."/>
            <person name="Wong E.D."/>
            <person name="Lloyd P."/>
            <person name="Skrzypek M.S."/>
            <person name="Miyasato S.R."/>
            <person name="Simison M."/>
            <person name="Cherry J.M."/>
        </authorList>
    </citation>
    <scope>GENOME REANNOTATION</scope>
    <source>
        <strain>ATCC 204508 / S288c</strain>
    </source>
</reference>
<reference key="4">
    <citation type="journal article" date="2003" name="Nature">
        <title>Global analysis of protein localization in budding yeast.</title>
        <authorList>
            <person name="Huh W.-K."/>
            <person name="Falvo J.V."/>
            <person name="Gerke L.C."/>
            <person name="Carroll A.S."/>
            <person name="Howson R.W."/>
            <person name="Weissman J.S."/>
            <person name="O'Shea E.K."/>
        </authorList>
    </citation>
    <scope>SUBCELLULAR LOCATION [LARGE SCALE ANALYSIS]</scope>
</reference>
<reference key="5">
    <citation type="journal article" date="2003" name="Nature">
        <title>Global analysis of protein expression in yeast.</title>
        <authorList>
            <person name="Ghaemmaghami S."/>
            <person name="Huh W.-K."/>
            <person name="Bower K."/>
            <person name="Howson R.W."/>
            <person name="Belle A."/>
            <person name="Dephoure N."/>
            <person name="O'Shea E.K."/>
            <person name="Weissman J.S."/>
        </authorList>
    </citation>
    <scope>LEVEL OF PROTEIN EXPRESSION [LARGE SCALE ANALYSIS]</scope>
</reference>
<reference key="6">
    <citation type="journal article" date="2004" name="Mol. Biol. Cell">
        <title>Arf1p provides an unexpected link between COPI vesicles and mRNA in Saccharomyces cerevisiae.</title>
        <authorList>
            <person name="Trautwein M."/>
            <person name="Dengjel J."/>
            <person name="Schirle M."/>
            <person name="Spang A."/>
        </authorList>
    </citation>
    <scope>SUBUNIT</scope>
    <scope>IDENTIFICATION BY MASS SPECTROMETRY</scope>
</reference>
<reference key="7">
    <citation type="journal article" date="2005" name="Mol. Biol. Cell">
        <title>Role of essential genes in mitochondrial morphogenesis in Saccharomyces cerevisiae.</title>
        <authorList>
            <person name="Altmann K."/>
            <person name="Westermann B."/>
        </authorList>
    </citation>
    <scope>FUNCTION</scope>
</reference>
<reference key="8">
    <citation type="journal article" date="2007" name="J. Cell Biol.">
        <title>Novel cargo-binding site in the beta and delta subunits of coatomer.</title>
        <authorList>
            <person name="Michelsen K."/>
            <person name="Schmid V."/>
            <person name="Metz J."/>
            <person name="Heusser K."/>
            <person name="Liebel U."/>
            <person name="Schwede T."/>
            <person name="Spang A."/>
            <person name="Schwappach B."/>
        </authorList>
    </citation>
    <scope>MUTAGENESIS OF 334-ASP--ASP-336</scope>
</reference>
<reference key="9">
    <citation type="journal article" date="2008" name="Mol. Cell. Proteomics">
        <title>A multidimensional chromatography technology for in-depth phosphoproteome analysis.</title>
        <authorList>
            <person name="Albuquerque C.P."/>
            <person name="Smolka M.B."/>
            <person name="Payne S.H."/>
            <person name="Bafna V."/>
            <person name="Eng J."/>
            <person name="Zhou H."/>
        </authorList>
    </citation>
    <scope>PHOSPHORYLATION [LARGE SCALE ANALYSIS] AT SER-181 AND SER-540</scope>
    <scope>IDENTIFICATION BY MASS SPECTROMETRY [LARGE SCALE ANALYSIS]</scope>
</reference>
<dbReference type="EMBL" id="U11236">
    <property type="protein sequence ID" value="AAA61710.1"/>
    <property type="molecule type" value="Genomic_DNA"/>
</dbReference>
<dbReference type="EMBL" id="Z49701">
    <property type="protein sequence ID" value="CAA89724.1"/>
    <property type="molecule type" value="Genomic_DNA"/>
</dbReference>
<dbReference type="EMBL" id="BK006938">
    <property type="protein sequence ID" value="DAA12079.1"/>
    <property type="molecule type" value="Genomic_DNA"/>
</dbReference>
<dbReference type="PIR" id="S54534">
    <property type="entry name" value="S54534"/>
</dbReference>
<dbReference type="RefSeq" id="NP_010524.3">
    <property type="nucleotide sequence ID" value="NM_001180546.3"/>
</dbReference>
<dbReference type="SMR" id="P41810"/>
<dbReference type="BioGRID" id="32289">
    <property type="interactions" value="694"/>
</dbReference>
<dbReference type="ComplexPortal" id="CPX-1652">
    <property type="entry name" value="COPI vesicle coat complex"/>
</dbReference>
<dbReference type="DIP" id="DIP-6467N"/>
<dbReference type="FunCoup" id="P41810">
    <property type="interactions" value="1546"/>
</dbReference>
<dbReference type="IntAct" id="P41810">
    <property type="interactions" value="43"/>
</dbReference>
<dbReference type="MINT" id="P41810"/>
<dbReference type="STRING" id="4932.YDR238C"/>
<dbReference type="iPTMnet" id="P41810"/>
<dbReference type="PaxDb" id="4932-YDR238C"/>
<dbReference type="PeptideAtlas" id="P41810"/>
<dbReference type="EnsemblFungi" id="YDR238C_mRNA">
    <property type="protein sequence ID" value="YDR238C"/>
    <property type="gene ID" value="YDR238C"/>
</dbReference>
<dbReference type="GeneID" id="851824"/>
<dbReference type="KEGG" id="sce:YDR238C"/>
<dbReference type="AGR" id="SGD:S000002646"/>
<dbReference type="SGD" id="S000002646">
    <property type="gene designation" value="SEC26"/>
</dbReference>
<dbReference type="VEuPathDB" id="FungiDB:YDR238C"/>
<dbReference type="eggNOG" id="KOG1058">
    <property type="taxonomic scope" value="Eukaryota"/>
</dbReference>
<dbReference type="GeneTree" id="ENSGT00390000005270"/>
<dbReference type="HOGENOM" id="CLU_006949_0_0_1"/>
<dbReference type="InParanoid" id="P41810"/>
<dbReference type="OMA" id="IYKNFDW"/>
<dbReference type="OrthoDB" id="10261439at2759"/>
<dbReference type="BioCyc" id="YEAST:G3O-29813-MONOMER"/>
<dbReference type="Reactome" id="R-SCE-6798695">
    <property type="pathway name" value="Neutrophil degranulation"/>
</dbReference>
<dbReference type="Reactome" id="R-SCE-6807878">
    <property type="pathway name" value="COPI-mediated anterograde transport"/>
</dbReference>
<dbReference type="Reactome" id="R-SCE-6811434">
    <property type="pathway name" value="COPI-dependent Golgi-to-ER retrograde traffic"/>
</dbReference>
<dbReference type="BioGRID-ORCS" id="851824">
    <property type="hits" value="1 hit in 10 CRISPR screens"/>
</dbReference>
<dbReference type="CD-CODE" id="E03F929F">
    <property type="entry name" value="Stress granule"/>
</dbReference>
<dbReference type="PRO" id="PR:P41810"/>
<dbReference type="Proteomes" id="UP000002311">
    <property type="component" value="Chromosome IV"/>
</dbReference>
<dbReference type="RNAct" id="P41810">
    <property type="molecule type" value="protein"/>
</dbReference>
<dbReference type="GO" id="GO:0030126">
    <property type="term" value="C:COPI vesicle coat"/>
    <property type="evidence" value="ECO:0000314"/>
    <property type="project" value="SGD"/>
</dbReference>
<dbReference type="GO" id="GO:0000139">
    <property type="term" value="C:Golgi membrane"/>
    <property type="evidence" value="ECO:0007669"/>
    <property type="project" value="UniProtKB-SubCell"/>
</dbReference>
<dbReference type="GO" id="GO:0005198">
    <property type="term" value="F:structural molecule activity"/>
    <property type="evidence" value="ECO:0007669"/>
    <property type="project" value="InterPro"/>
</dbReference>
<dbReference type="GO" id="GO:0006888">
    <property type="term" value="P:endoplasmic reticulum to Golgi vesicle-mediated transport"/>
    <property type="evidence" value="ECO:0000315"/>
    <property type="project" value="SGD"/>
</dbReference>
<dbReference type="GO" id="GO:0006891">
    <property type="term" value="P:intra-Golgi vesicle-mediated transport"/>
    <property type="evidence" value="ECO:0000318"/>
    <property type="project" value="GO_Central"/>
</dbReference>
<dbReference type="GO" id="GO:0008298">
    <property type="term" value="P:intracellular mRNA localization"/>
    <property type="evidence" value="ECO:0000315"/>
    <property type="project" value="SGD"/>
</dbReference>
<dbReference type="GO" id="GO:0006886">
    <property type="term" value="P:intracellular protein transport"/>
    <property type="evidence" value="ECO:0007669"/>
    <property type="project" value="InterPro"/>
</dbReference>
<dbReference type="GO" id="GO:0006890">
    <property type="term" value="P:retrograde vesicle-mediated transport, Golgi to endoplasmic reticulum"/>
    <property type="evidence" value="ECO:0000303"/>
    <property type="project" value="ComplexPortal"/>
</dbReference>
<dbReference type="FunFam" id="1.25.10.10:FF:000430">
    <property type="entry name" value="Coatomer subunit beta"/>
    <property type="match status" value="1"/>
</dbReference>
<dbReference type="Gene3D" id="1.25.10.10">
    <property type="entry name" value="Leucine-rich Repeat Variant"/>
    <property type="match status" value="1"/>
</dbReference>
<dbReference type="InterPro" id="IPR011989">
    <property type="entry name" value="ARM-like"/>
</dbReference>
<dbReference type="InterPro" id="IPR016024">
    <property type="entry name" value="ARM-type_fold"/>
</dbReference>
<dbReference type="InterPro" id="IPR000225">
    <property type="entry name" value="Armadillo"/>
</dbReference>
<dbReference type="InterPro" id="IPR002553">
    <property type="entry name" value="Clathrin/coatomer_adapt-like_N"/>
</dbReference>
<dbReference type="InterPro" id="IPR011710">
    <property type="entry name" value="Coatomer_bsu_C"/>
</dbReference>
<dbReference type="InterPro" id="IPR016460">
    <property type="entry name" value="COPB1"/>
</dbReference>
<dbReference type="InterPro" id="IPR029446">
    <property type="entry name" value="COPB1_appendage_platform_dom"/>
</dbReference>
<dbReference type="PANTHER" id="PTHR10635">
    <property type="entry name" value="COATOMER SUBUNIT BETA"/>
    <property type="match status" value="1"/>
</dbReference>
<dbReference type="PANTHER" id="PTHR10635:SF0">
    <property type="entry name" value="COATOMER SUBUNIT BETA"/>
    <property type="match status" value="1"/>
</dbReference>
<dbReference type="Pfam" id="PF01602">
    <property type="entry name" value="Adaptin_N"/>
    <property type="match status" value="1"/>
</dbReference>
<dbReference type="Pfam" id="PF07718">
    <property type="entry name" value="Coatamer_beta_C"/>
    <property type="match status" value="1"/>
</dbReference>
<dbReference type="Pfam" id="PF14806">
    <property type="entry name" value="Coatomer_b_Cpla"/>
    <property type="match status" value="1"/>
</dbReference>
<dbReference type="PIRSF" id="PIRSF005727">
    <property type="entry name" value="Coatomer_beta_subunit"/>
    <property type="match status" value="1"/>
</dbReference>
<dbReference type="SMART" id="SM00185">
    <property type="entry name" value="ARM"/>
    <property type="match status" value="1"/>
</dbReference>
<dbReference type="SUPFAM" id="SSF48371">
    <property type="entry name" value="ARM repeat"/>
    <property type="match status" value="1"/>
</dbReference>
<organism>
    <name type="scientific">Saccharomyces cerevisiae (strain ATCC 204508 / S288c)</name>
    <name type="common">Baker's yeast</name>
    <dbReference type="NCBI Taxonomy" id="559292"/>
    <lineage>
        <taxon>Eukaryota</taxon>
        <taxon>Fungi</taxon>
        <taxon>Dikarya</taxon>
        <taxon>Ascomycota</taxon>
        <taxon>Saccharomycotina</taxon>
        <taxon>Saccharomycetes</taxon>
        <taxon>Saccharomycetales</taxon>
        <taxon>Saccharomycetaceae</taxon>
        <taxon>Saccharomyces</taxon>
    </lineage>
</organism>
<feature type="chain" id="PRO_0000193839" description="Coatomer subunit beta">
    <location>
        <begin position="1"/>
        <end position="973"/>
    </location>
</feature>
<feature type="repeat" description="HEAT 1">
    <location>
        <begin position="98"/>
        <end position="133"/>
    </location>
</feature>
<feature type="repeat" description="HEAT 2">
    <location>
        <begin position="134"/>
        <end position="170"/>
    </location>
</feature>
<feature type="repeat" description="HEAT 3">
    <location>
        <begin position="279"/>
        <end position="317"/>
    </location>
</feature>
<feature type="repeat" description="HEAT 4">
    <location>
        <begin position="318"/>
        <end position="354"/>
    </location>
</feature>
<feature type="modified residue" description="Phosphoserine" evidence="9">
    <location>
        <position position="181"/>
    </location>
</feature>
<feature type="modified residue" description="Phosphoserine" evidence="9">
    <location>
        <position position="540"/>
    </location>
</feature>
<feature type="mutagenesis site" description="Loses ability to recognize arginine (R)-based ER localization signals in proteins. Recognition of C-terminal di-lysine signals present in proteins is unimpaired." evidence="6">
    <original>DLD</original>
    <variation>NAN</variation>
    <location>
        <begin position="334"/>
        <end position="336"/>
    </location>
</feature>
<feature type="sequence conflict" description="In Ref. 1; AAA61710." evidence="8" ref="1">
    <original>D</original>
    <variation>E</variation>
    <location>
        <position position="412"/>
    </location>
</feature>
<accession>P41810</accession>
<accession>D6VSL9</accession>
<accession>Q03779</accession>